<proteinExistence type="evidence at transcript level"/>
<gene>
    <name type="primary">ICL</name>
</gene>
<dbReference type="EC" id="4.1.3.1" evidence="1"/>
<dbReference type="EMBL" id="AF193815">
    <property type="protein sequence ID" value="AAF04598.1"/>
    <property type="molecule type" value="mRNA"/>
</dbReference>
<dbReference type="SMR" id="Q9SE26"/>
<dbReference type="UniPathway" id="UPA00703">
    <property type="reaction ID" value="UER00719"/>
</dbReference>
<dbReference type="GO" id="GO:0009514">
    <property type="term" value="C:glyoxysome"/>
    <property type="evidence" value="ECO:0007669"/>
    <property type="project" value="UniProtKB-SubCell"/>
</dbReference>
<dbReference type="GO" id="GO:0004451">
    <property type="term" value="F:isocitrate lyase activity"/>
    <property type="evidence" value="ECO:0007669"/>
    <property type="project" value="UniProtKB-EC"/>
</dbReference>
<dbReference type="GO" id="GO:0046872">
    <property type="term" value="F:metal ion binding"/>
    <property type="evidence" value="ECO:0007669"/>
    <property type="project" value="UniProtKB-KW"/>
</dbReference>
<dbReference type="GO" id="GO:0006097">
    <property type="term" value="P:glyoxylate cycle"/>
    <property type="evidence" value="ECO:0007669"/>
    <property type="project" value="UniProtKB-UniPathway"/>
</dbReference>
<dbReference type="GO" id="GO:0006099">
    <property type="term" value="P:tricarboxylic acid cycle"/>
    <property type="evidence" value="ECO:0007669"/>
    <property type="project" value="UniProtKB-KW"/>
</dbReference>
<dbReference type="CDD" id="cd00377">
    <property type="entry name" value="ICL_PEPM"/>
    <property type="match status" value="1"/>
</dbReference>
<dbReference type="FunFam" id="1.10.10.850:FF:000001">
    <property type="entry name" value="Isocitrate lyase"/>
    <property type="match status" value="1"/>
</dbReference>
<dbReference type="Gene3D" id="1.10.10.850">
    <property type="match status" value="1"/>
</dbReference>
<dbReference type="Gene3D" id="3.20.20.60">
    <property type="entry name" value="Phosphoenolpyruvate-binding domains"/>
    <property type="match status" value="1"/>
</dbReference>
<dbReference type="InterPro" id="IPR039556">
    <property type="entry name" value="ICL/PEPM"/>
</dbReference>
<dbReference type="InterPro" id="IPR006254">
    <property type="entry name" value="Isocitrate_lyase"/>
</dbReference>
<dbReference type="InterPro" id="IPR018523">
    <property type="entry name" value="Isocitrate_lyase_ph_CS"/>
</dbReference>
<dbReference type="InterPro" id="IPR015813">
    <property type="entry name" value="Pyrv/PenolPyrv_kinase-like_dom"/>
</dbReference>
<dbReference type="InterPro" id="IPR040442">
    <property type="entry name" value="Pyrv_kinase-like_dom_sf"/>
</dbReference>
<dbReference type="NCBIfam" id="TIGR01346">
    <property type="entry name" value="isocit_lyase"/>
    <property type="match status" value="1"/>
</dbReference>
<dbReference type="PANTHER" id="PTHR21631:SF3">
    <property type="entry name" value="BIFUNCTIONAL GLYOXYLATE CYCLE PROTEIN"/>
    <property type="match status" value="1"/>
</dbReference>
<dbReference type="PANTHER" id="PTHR21631">
    <property type="entry name" value="ISOCITRATE LYASE/MALATE SYNTHASE"/>
    <property type="match status" value="1"/>
</dbReference>
<dbReference type="Pfam" id="PF00463">
    <property type="entry name" value="ICL"/>
    <property type="match status" value="1"/>
</dbReference>
<dbReference type="PIRSF" id="PIRSF001362">
    <property type="entry name" value="Isocit_lyase"/>
    <property type="match status" value="1"/>
</dbReference>
<dbReference type="SUPFAM" id="SSF51621">
    <property type="entry name" value="Phosphoenolpyruvate/pyruvate domain"/>
    <property type="match status" value="1"/>
</dbReference>
<dbReference type="PROSITE" id="PS00161">
    <property type="entry name" value="ISOCITRATE_LYASE"/>
    <property type="match status" value="1"/>
</dbReference>
<keyword id="KW-0329">Glyoxylate bypass</keyword>
<keyword id="KW-0330">Glyoxysome</keyword>
<keyword id="KW-0456">Lyase</keyword>
<keyword id="KW-0460">Magnesium</keyword>
<keyword id="KW-0479">Metal-binding</keyword>
<keyword id="KW-0576">Peroxisome</keyword>
<keyword id="KW-0816">Tricarboxylic acid cycle</keyword>
<reference key="1">
    <citation type="online journal article" date="1999" name="Plant Gene Register">
        <title>Sequence analysis of DcrIcl, an isocitrate lyase gene from the tropical orchid, Dendrobium crumenatum.</title>
        <authorList>
            <person name="Vellupillai M."/>
            <person name="Goh C.-J."/>
            <person name="Swarup S."/>
        </authorList>
        <locator>PGR99-178</locator>
    </citation>
    <scope>NUCLEOTIDE SEQUENCE [MRNA]</scope>
</reference>
<evidence type="ECO:0000250" key="1">
    <source>
        <dbReference type="UniProtKB" id="P28297"/>
    </source>
</evidence>
<evidence type="ECO:0000250" key="2">
    <source>
        <dbReference type="UniProtKB" id="P9WKK7"/>
    </source>
</evidence>
<evidence type="ECO:0000255" key="3"/>
<evidence type="ECO:0000256" key="4">
    <source>
        <dbReference type="SAM" id="MobiDB-lite"/>
    </source>
</evidence>
<evidence type="ECO:0000305" key="5"/>
<comment type="function">
    <text evidence="1">Involved in storage lipid mobilization during the growth of higher plant seedling.</text>
</comment>
<comment type="catalytic activity">
    <reaction evidence="1">
        <text>D-threo-isocitrate = glyoxylate + succinate</text>
        <dbReference type="Rhea" id="RHEA:13245"/>
        <dbReference type="ChEBI" id="CHEBI:15562"/>
        <dbReference type="ChEBI" id="CHEBI:30031"/>
        <dbReference type="ChEBI" id="CHEBI:36655"/>
        <dbReference type="EC" id="4.1.3.1"/>
    </reaction>
</comment>
<comment type="cofactor">
    <cofactor evidence="2">
        <name>Mg(2+)</name>
        <dbReference type="ChEBI" id="CHEBI:18420"/>
    </cofactor>
</comment>
<comment type="pathway">
    <text evidence="1">Carbohydrate metabolism; glyoxylate cycle; (S)-malate from isocitrate: step 1/2.</text>
</comment>
<comment type="subunit">
    <text evidence="1">Homotetramer.</text>
</comment>
<comment type="subcellular location">
    <subcellularLocation>
        <location evidence="1">Glyoxysome</location>
    </subcellularLocation>
</comment>
<comment type="developmental stage">
    <text>Expressed maximally during postgerminative growth.</text>
</comment>
<comment type="similarity">
    <text evidence="5">Belongs to the isocitrate lyase/PEP mutase superfamily. Isocitrate lyase family.</text>
</comment>
<feature type="chain" id="PRO_0000068805" description="Isocitrate lyase">
    <location>
        <begin position="1"/>
        <end position="574"/>
    </location>
</feature>
<feature type="region of interest" description="Disordered" evidence="4">
    <location>
        <begin position="549"/>
        <end position="574"/>
    </location>
</feature>
<feature type="short sequence motif" description="Microbody targeting signal" evidence="3">
    <location>
        <begin position="572"/>
        <end position="574"/>
    </location>
</feature>
<feature type="compositionally biased region" description="Basic and acidic residues" evidence="4">
    <location>
        <begin position="549"/>
        <end position="562"/>
    </location>
</feature>
<feature type="active site" description="Proton acceptor" evidence="2">
    <location>
        <position position="212"/>
    </location>
</feature>
<feature type="binding site" evidence="2">
    <location>
        <begin position="103"/>
        <end position="105"/>
    </location>
    <ligand>
        <name>substrate</name>
    </ligand>
</feature>
<feature type="binding site" evidence="2">
    <location>
        <position position="174"/>
    </location>
    <ligand>
        <name>Mg(2+)</name>
        <dbReference type="ChEBI" id="CHEBI:18420"/>
    </ligand>
</feature>
<feature type="binding site" evidence="2">
    <location>
        <begin position="213"/>
        <end position="214"/>
    </location>
    <ligand>
        <name>substrate</name>
    </ligand>
</feature>
<feature type="binding site" evidence="2">
    <location>
        <position position="249"/>
    </location>
    <ligand>
        <name>substrate</name>
    </ligand>
</feature>
<feature type="binding site" evidence="2">
    <location>
        <begin position="436"/>
        <end position="440"/>
    </location>
    <ligand>
        <name>substrate</name>
    </ligand>
</feature>
<feature type="binding site" evidence="2">
    <location>
        <position position="471"/>
    </location>
    <ligand>
        <name>substrate</name>
    </ligand>
</feature>
<sequence>MASSSVPPMITEEEARFEAEVSAVESWWRTDRFRLTRRPYSARDVVSLRGTLHHSYASDQMAKKLWRTLKSHQSAGTASRTFGALDPVQVTMMAKHLDTIYVSGWQCSSTHTATNEPGPDLADYPYNTVPNKVEHLFFAQLYHDRKQHEARVSMTREQRAKTPYVDYLRPIIADGDTGFGGATATVKLCKLFVERGAAGVHIEDQSSVTKKCGHMAGKVLVAVSEHINRLVAARLQFDVMGVETVLVARTDAVAATLIQSNVDLRDHQFILGATNPDFKRRSLAAVLSAAMAAGKTGAVLQAIEDDWLSRAGLMTFSDAVINGINRQNLPEYEKQRRLNEWAAATEYSKCVSNEQGREIAERLGAGEIFWDWDIARTREGFYRFRGSVEAAVVRGRAFAPHADLIWMETSSPDLVECGKFAQGMKASHPEIMLAYNLSPSFNWDAAGMTDEEMRDFIPRIAKMGFCWQFITLGGFHADALVTDTFAREFAKQGMLAYVERIQREERNNGVDTLAHQKWSGANYYDRYLKTVQGGISSTAAMGKGVTEEQFKEESRTGTRGLDRGGITVNAKSRL</sequence>
<organism>
    <name type="scientific">Dendrobium crumenatum</name>
    <name type="common">Tropical pigeon orchid</name>
    <dbReference type="NCBI Taxonomy" id="51096"/>
    <lineage>
        <taxon>Eukaryota</taxon>
        <taxon>Viridiplantae</taxon>
        <taxon>Streptophyta</taxon>
        <taxon>Embryophyta</taxon>
        <taxon>Tracheophyta</taxon>
        <taxon>Spermatophyta</taxon>
        <taxon>Magnoliopsida</taxon>
        <taxon>Liliopsida</taxon>
        <taxon>Asparagales</taxon>
        <taxon>Orchidaceae</taxon>
        <taxon>Epidendroideae</taxon>
        <taxon>Malaxideae</taxon>
        <taxon>Dendrobiinae</taxon>
        <taxon>Dendrobium</taxon>
    </lineage>
</organism>
<accession>Q9SE26</accession>
<protein>
    <recommendedName>
        <fullName evidence="1">Isocitrate lyase</fullName>
        <shortName evidence="1">ICL</shortName>
        <ecNumber evidence="1">4.1.3.1</ecNumber>
    </recommendedName>
    <alternativeName>
        <fullName evidence="1">Isocitrase</fullName>
    </alternativeName>
    <alternativeName>
        <fullName evidence="1">Isocitratsysase</fullName>
    </alternativeName>
</protein>
<name>ACEA_DENCR</name>